<protein>
    <recommendedName>
        <fullName evidence="1">Carboxy-S-adenosyl-L-methionine synthase</fullName>
        <shortName evidence="1">Cx-SAM synthase</shortName>
        <ecNumber evidence="1">2.1.3.-</ecNumber>
    </recommendedName>
</protein>
<feature type="chain" id="PRO_0000314396" description="Carboxy-S-adenosyl-L-methionine synthase">
    <location>
        <begin position="1"/>
        <end position="235"/>
    </location>
</feature>
<feature type="binding site" evidence="1">
    <location>
        <position position="35"/>
    </location>
    <ligand>
        <name>S-adenosyl-L-methionine</name>
        <dbReference type="ChEBI" id="CHEBI:59789"/>
    </ligand>
</feature>
<feature type="binding site" evidence="1">
    <location>
        <begin position="60"/>
        <end position="62"/>
    </location>
    <ligand>
        <name>S-adenosyl-L-methionine</name>
        <dbReference type="ChEBI" id="CHEBI:59789"/>
    </ligand>
</feature>
<feature type="binding site" evidence="1">
    <location>
        <begin position="84"/>
        <end position="85"/>
    </location>
    <ligand>
        <name>S-adenosyl-L-methionine</name>
        <dbReference type="ChEBI" id="CHEBI:59789"/>
    </ligand>
</feature>
<feature type="binding site" evidence="1">
    <location>
        <begin position="110"/>
        <end position="111"/>
    </location>
    <ligand>
        <name>S-adenosyl-L-methionine</name>
        <dbReference type="ChEBI" id="CHEBI:59789"/>
    </ligand>
</feature>
<feature type="binding site" evidence="1">
    <location>
        <position position="125"/>
    </location>
    <ligand>
        <name>S-adenosyl-L-methionine</name>
        <dbReference type="ChEBI" id="CHEBI:59789"/>
    </ligand>
</feature>
<feature type="binding site" evidence="1">
    <location>
        <position position="192"/>
    </location>
    <ligand>
        <name>S-adenosyl-L-methionine</name>
        <dbReference type="ChEBI" id="CHEBI:59789"/>
    </ligand>
</feature>
<reference key="1">
    <citation type="journal article" date="2008" name="Appl. Environ. Microbiol.">
        <title>Genome of the epsilonproteobacterial chemolithoautotroph Sulfurimonas denitrificans.</title>
        <authorList>
            <person name="Sievert S.M."/>
            <person name="Scott K.M."/>
            <person name="Klotz M.G."/>
            <person name="Chain P.S.G."/>
            <person name="Hauser L.J."/>
            <person name="Hemp J."/>
            <person name="Huegler M."/>
            <person name="Land M."/>
            <person name="Lapidus A."/>
            <person name="Larimer F.W."/>
            <person name="Lucas S."/>
            <person name="Malfatti S.A."/>
            <person name="Meyer F."/>
            <person name="Paulsen I.T."/>
            <person name="Ren Q."/>
            <person name="Simon J."/>
            <person name="Bailey K."/>
            <person name="Diaz E."/>
            <person name="Fitzpatrick K.A."/>
            <person name="Glover B."/>
            <person name="Gwatney N."/>
            <person name="Korajkic A."/>
            <person name="Long A."/>
            <person name="Mobberley J.M."/>
            <person name="Pantry S.N."/>
            <person name="Pazder G."/>
            <person name="Peterson S."/>
            <person name="Quintanilla J.D."/>
            <person name="Sprinkle R."/>
            <person name="Stephens J."/>
            <person name="Thomas P."/>
            <person name="Vaughn R."/>
            <person name="Weber M.J."/>
            <person name="Wooten L.L."/>
        </authorList>
    </citation>
    <scope>NUCLEOTIDE SEQUENCE [LARGE SCALE GENOMIC DNA]</scope>
    <source>
        <strain>ATCC 33889 / DSM 1251</strain>
    </source>
</reference>
<keyword id="KW-1185">Reference proteome</keyword>
<keyword id="KW-0949">S-adenosyl-L-methionine</keyword>
<keyword id="KW-0808">Transferase</keyword>
<comment type="function">
    <text evidence="1">Catalyzes the conversion of S-adenosyl-L-methionine (SAM) to carboxy-S-adenosyl-L-methionine (Cx-SAM).</text>
</comment>
<comment type="catalytic activity">
    <reaction evidence="1">
        <text>prephenate + S-adenosyl-L-methionine = carboxy-S-adenosyl-L-methionine + 3-phenylpyruvate + H2O</text>
        <dbReference type="Rhea" id="RHEA:51692"/>
        <dbReference type="ChEBI" id="CHEBI:15377"/>
        <dbReference type="ChEBI" id="CHEBI:18005"/>
        <dbReference type="ChEBI" id="CHEBI:29934"/>
        <dbReference type="ChEBI" id="CHEBI:59789"/>
        <dbReference type="ChEBI" id="CHEBI:134278"/>
    </reaction>
</comment>
<comment type="subunit">
    <text evidence="1">Homodimer.</text>
</comment>
<comment type="similarity">
    <text evidence="1">Belongs to the class I-like SAM-binding methyltransferase superfamily. Cx-SAM synthase family.</text>
</comment>
<organism>
    <name type="scientific">Sulfurimonas denitrificans (strain ATCC 33889 / DSM 1251)</name>
    <name type="common">Thiomicrospira denitrificans (strain ATCC 33889 / DSM 1251)</name>
    <dbReference type="NCBI Taxonomy" id="326298"/>
    <lineage>
        <taxon>Bacteria</taxon>
        <taxon>Pseudomonadati</taxon>
        <taxon>Campylobacterota</taxon>
        <taxon>Epsilonproteobacteria</taxon>
        <taxon>Campylobacterales</taxon>
        <taxon>Sulfurimonadaceae</taxon>
        <taxon>Sulfurimonas</taxon>
    </lineage>
</organism>
<name>CMOA_SULDN</name>
<evidence type="ECO:0000255" key="1">
    <source>
        <dbReference type="HAMAP-Rule" id="MF_01589"/>
    </source>
</evidence>
<proteinExistence type="inferred from homology"/>
<sequence>MNDKVFTKAIKKQFEFDEEVAAVFDDMLQRSVPFYKESQKISEFFAQKALQNGGIAYDLGCSTATLLINISRKLQNKATLIGLDNSEAMLQRARKKCEAFKADIELENADILEYDYREANLFISNYTLQFVRPLIREELVKKIASSLKKDGLFIFSEKVISHHSKLHKDLIECYYDFKKEQGYSEYEIVQKREALENVLIPYSEEENIKMAKNCGFSHCEVVFRWANFATFIAIK</sequence>
<gene>
    <name evidence="1" type="primary">cmoA</name>
    <name type="ordered locus">Suden_0511</name>
</gene>
<dbReference type="EC" id="2.1.3.-" evidence="1"/>
<dbReference type="EMBL" id="CP000153">
    <property type="protein sequence ID" value="ABB43791.1"/>
    <property type="molecule type" value="Genomic_DNA"/>
</dbReference>
<dbReference type="RefSeq" id="WP_011372145.1">
    <property type="nucleotide sequence ID" value="NC_007575.1"/>
</dbReference>
<dbReference type="SMR" id="Q30T90"/>
<dbReference type="STRING" id="326298.Suden_0511"/>
<dbReference type="KEGG" id="tdn:Suden_0511"/>
<dbReference type="eggNOG" id="COG2226">
    <property type="taxonomic scope" value="Bacteria"/>
</dbReference>
<dbReference type="HOGENOM" id="CLU_078475_0_0_7"/>
<dbReference type="OrthoDB" id="5386938at2"/>
<dbReference type="Proteomes" id="UP000002714">
    <property type="component" value="Chromosome"/>
</dbReference>
<dbReference type="GO" id="GO:0016743">
    <property type="term" value="F:carboxyl- or carbamoyltransferase activity"/>
    <property type="evidence" value="ECO:0007669"/>
    <property type="project" value="UniProtKB-UniRule"/>
</dbReference>
<dbReference type="GO" id="GO:1904047">
    <property type="term" value="F:S-adenosyl-L-methionine binding"/>
    <property type="evidence" value="ECO:0007669"/>
    <property type="project" value="UniProtKB-UniRule"/>
</dbReference>
<dbReference type="GO" id="GO:0002098">
    <property type="term" value="P:tRNA wobble uridine modification"/>
    <property type="evidence" value="ECO:0007669"/>
    <property type="project" value="InterPro"/>
</dbReference>
<dbReference type="CDD" id="cd02440">
    <property type="entry name" value="AdoMet_MTases"/>
    <property type="match status" value="1"/>
</dbReference>
<dbReference type="Gene3D" id="3.40.50.150">
    <property type="entry name" value="Vaccinia Virus protein VP39"/>
    <property type="match status" value="1"/>
</dbReference>
<dbReference type="HAMAP" id="MF_01589">
    <property type="entry name" value="Cx_SAM_synthase"/>
    <property type="match status" value="1"/>
</dbReference>
<dbReference type="InterPro" id="IPR005271">
    <property type="entry name" value="CmoA"/>
</dbReference>
<dbReference type="InterPro" id="IPR025714">
    <property type="entry name" value="Methyltranfer_dom"/>
</dbReference>
<dbReference type="InterPro" id="IPR029063">
    <property type="entry name" value="SAM-dependent_MTases_sf"/>
</dbReference>
<dbReference type="NCBIfam" id="TIGR00740">
    <property type="entry name" value="carboxy-S-adenosyl-L-methionine synthase CmoA"/>
    <property type="match status" value="1"/>
</dbReference>
<dbReference type="PANTHER" id="PTHR43861:SF2">
    <property type="entry name" value="CARBOXY-S-ADENOSYL-L-METHIONINE SYNTHASE"/>
    <property type="match status" value="1"/>
</dbReference>
<dbReference type="PANTHER" id="PTHR43861">
    <property type="entry name" value="TRANS-ACONITATE 2-METHYLTRANSFERASE-RELATED"/>
    <property type="match status" value="1"/>
</dbReference>
<dbReference type="Pfam" id="PF13847">
    <property type="entry name" value="Methyltransf_31"/>
    <property type="match status" value="1"/>
</dbReference>
<dbReference type="PIRSF" id="PIRSF006325">
    <property type="entry name" value="MeTrfase_bac"/>
    <property type="match status" value="1"/>
</dbReference>
<dbReference type="SUPFAM" id="SSF53335">
    <property type="entry name" value="S-adenosyl-L-methionine-dependent methyltransferases"/>
    <property type="match status" value="1"/>
</dbReference>
<accession>Q30T90</accession>